<accession>A9VS98</accession>
<dbReference type="EC" id="7.1.1.-" evidence="1"/>
<dbReference type="EMBL" id="CP000903">
    <property type="protein sequence ID" value="ABY46244.1"/>
    <property type="molecule type" value="Genomic_DNA"/>
</dbReference>
<dbReference type="RefSeq" id="WP_000179270.1">
    <property type="nucleotide sequence ID" value="NZ_CAKMRX030000115.1"/>
</dbReference>
<dbReference type="SMR" id="A9VS98"/>
<dbReference type="GeneID" id="92886116"/>
<dbReference type="KEGG" id="bwe:BcerKBAB4_5098"/>
<dbReference type="eggNOG" id="COG0838">
    <property type="taxonomic scope" value="Bacteria"/>
</dbReference>
<dbReference type="HOGENOM" id="CLU_119549_1_1_9"/>
<dbReference type="Proteomes" id="UP000002154">
    <property type="component" value="Chromosome"/>
</dbReference>
<dbReference type="GO" id="GO:0030964">
    <property type="term" value="C:NADH dehydrogenase complex"/>
    <property type="evidence" value="ECO:0007669"/>
    <property type="project" value="TreeGrafter"/>
</dbReference>
<dbReference type="GO" id="GO:0005886">
    <property type="term" value="C:plasma membrane"/>
    <property type="evidence" value="ECO:0007669"/>
    <property type="project" value="UniProtKB-SubCell"/>
</dbReference>
<dbReference type="GO" id="GO:0008137">
    <property type="term" value="F:NADH dehydrogenase (ubiquinone) activity"/>
    <property type="evidence" value="ECO:0007669"/>
    <property type="project" value="InterPro"/>
</dbReference>
<dbReference type="GO" id="GO:0050136">
    <property type="term" value="F:NADH:ubiquinone reductase (non-electrogenic) activity"/>
    <property type="evidence" value="ECO:0007669"/>
    <property type="project" value="UniProtKB-UniRule"/>
</dbReference>
<dbReference type="GO" id="GO:0048038">
    <property type="term" value="F:quinone binding"/>
    <property type="evidence" value="ECO:0007669"/>
    <property type="project" value="UniProtKB-KW"/>
</dbReference>
<dbReference type="FunFam" id="1.20.58.1610:FF:000005">
    <property type="entry name" value="NADH-quinone oxidoreductase subunit A"/>
    <property type="match status" value="1"/>
</dbReference>
<dbReference type="Gene3D" id="1.20.58.1610">
    <property type="entry name" value="NADH:ubiquinone/plastoquinone oxidoreductase, chain 3"/>
    <property type="match status" value="1"/>
</dbReference>
<dbReference type="HAMAP" id="MF_01394">
    <property type="entry name" value="NDH1_NuoA"/>
    <property type="match status" value="1"/>
</dbReference>
<dbReference type="InterPro" id="IPR023043">
    <property type="entry name" value="NAD(P)H_OxRDtase_bac/plastid"/>
</dbReference>
<dbReference type="InterPro" id="IPR000440">
    <property type="entry name" value="NADH_UbQ/plastoQ_OxRdtase_su3"/>
</dbReference>
<dbReference type="InterPro" id="IPR038430">
    <property type="entry name" value="NDAH_ubi_oxred_su3_sf"/>
</dbReference>
<dbReference type="NCBIfam" id="NF005839">
    <property type="entry name" value="PRK07756.1"/>
    <property type="match status" value="1"/>
</dbReference>
<dbReference type="PANTHER" id="PTHR11058">
    <property type="entry name" value="NADH-UBIQUINONE OXIDOREDUCTASE CHAIN 3"/>
    <property type="match status" value="1"/>
</dbReference>
<dbReference type="PANTHER" id="PTHR11058:SF9">
    <property type="entry name" value="NADH-UBIQUINONE OXIDOREDUCTASE CHAIN 3"/>
    <property type="match status" value="1"/>
</dbReference>
<dbReference type="Pfam" id="PF00507">
    <property type="entry name" value="Oxidored_q4"/>
    <property type="match status" value="1"/>
</dbReference>
<reference key="1">
    <citation type="journal article" date="2008" name="Chem. Biol. Interact.">
        <title>Extending the Bacillus cereus group genomics to putative food-borne pathogens of different toxicity.</title>
        <authorList>
            <person name="Lapidus A."/>
            <person name="Goltsman E."/>
            <person name="Auger S."/>
            <person name="Galleron N."/>
            <person name="Segurens B."/>
            <person name="Dossat C."/>
            <person name="Land M.L."/>
            <person name="Broussolle V."/>
            <person name="Brillard J."/>
            <person name="Guinebretiere M.-H."/>
            <person name="Sanchis V."/>
            <person name="Nguen-the C."/>
            <person name="Lereclus D."/>
            <person name="Richardson P."/>
            <person name="Wincker P."/>
            <person name="Weissenbach J."/>
            <person name="Ehrlich S.D."/>
            <person name="Sorokin A."/>
        </authorList>
    </citation>
    <scope>NUCLEOTIDE SEQUENCE [LARGE SCALE GENOMIC DNA]</scope>
    <source>
        <strain>KBAB4</strain>
    </source>
</reference>
<name>NUOA_BACMK</name>
<gene>
    <name evidence="1" type="primary">nuoA</name>
    <name type="ordered locus">BcerKBAB4_5098</name>
</gene>
<sequence>MASVYENSYMIVLIFLLLGILLPVVALTLGKMLRPNKPSAAKATTYESGIEPFHDANIRFHARYYIFALLFVIFDVETLFLYPWAVAYDKLGLFALIEMLIFVVMLLVGLAYAWKKKVLQWL</sequence>
<feature type="chain" id="PRO_0000362625" description="NADH-quinone oxidoreductase subunit A">
    <location>
        <begin position="1"/>
        <end position="122"/>
    </location>
</feature>
<feature type="transmembrane region" description="Helical" evidence="1">
    <location>
        <begin position="10"/>
        <end position="30"/>
    </location>
</feature>
<feature type="transmembrane region" description="Helical" evidence="1">
    <location>
        <begin position="66"/>
        <end position="86"/>
    </location>
</feature>
<feature type="transmembrane region" description="Helical" evidence="1">
    <location>
        <begin position="91"/>
        <end position="111"/>
    </location>
</feature>
<protein>
    <recommendedName>
        <fullName evidence="1">NADH-quinone oxidoreductase subunit A</fullName>
        <ecNumber evidence="1">7.1.1.-</ecNumber>
    </recommendedName>
    <alternativeName>
        <fullName evidence="1">NADH dehydrogenase I subunit A</fullName>
    </alternativeName>
    <alternativeName>
        <fullName evidence="1">NDH-1 subunit A</fullName>
    </alternativeName>
    <alternativeName>
        <fullName evidence="1">NUO1</fullName>
    </alternativeName>
</protein>
<proteinExistence type="inferred from homology"/>
<organism>
    <name type="scientific">Bacillus mycoides (strain KBAB4)</name>
    <name type="common">Bacillus weihenstephanensis</name>
    <dbReference type="NCBI Taxonomy" id="315730"/>
    <lineage>
        <taxon>Bacteria</taxon>
        <taxon>Bacillati</taxon>
        <taxon>Bacillota</taxon>
        <taxon>Bacilli</taxon>
        <taxon>Bacillales</taxon>
        <taxon>Bacillaceae</taxon>
        <taxon>Bacillus</taxon>
        <taxon>Bacillus cereus group</taxon>
    </lineage>
</organism>
<keyword id="KW-1003">Cell membrane</keyword>
<keyword id="KW-0472">Membrane</keyword>
<keyword id="KW-0520">NAD</keyword>
<keyword id="KW-0874">Quinone</keyword>
<keyword id="KW-1278">Translocase</keyword>
<keyword id="KW-0812">Transmembrane</keyword>
<keyword id="KW-1133">Transmembrane helix</keyword>
<keyword id="KW-0813">Transport</keyword>
<comment type="function">
    <text evidence="1">NDH-1 shuttles electrons from NADH, via FMN and iron-sulfur (Fe-S) centers, to quinones in the respiratory chain. The immediate electron acceptor for the enzyme in this species is believed to be a menaquinone. Couples the redox reaction to proton translocation (for every two electrons transferred, four hydrogen ions are translocated across the cytoplasmic membrane), and thus conserves the redox energy in a proton gradient.</text>
</comment>
<comment type="catalytic activity">
    <reaction evidence="1">
        <text>a quinone + NADH + 5 H(+)(in) = a quinol + NAD(+) + 4 H(+)(out)</text>
        <dbReference type="Rhea" id="RHEA:57888"/>
        <dbReference type="ChEBI" id="CHEBI:15378"/>
        <dbReference type="ChEBI" id="CHEBI:24646"/>
        <dbReference type="ChEBI" id="CHEBI:57540"/>
        <dbReference type="ChEBI" id="CHEBI:57945"/>
        <dbReference type="ChEBI" id="CHEBI:132124"/>
    </reaction>
</comment>
<comment type="subunit">
    <text evidence="1">NDH-1 is composed of 14 different subunits. Subunits NuoA, H, J, K, L, M, N constitute the membrane sector of the complex.</text>
</comment>
<comment type="subcellular location">
    <subcellularLocation>
        <location evidence="1">Cell membrane</location>
        <topology evidence="1">Multi-pass membrane protein</topology>
    </subcellularLocation>
</comment>
<comment type="similarity">
    <text evidence="1">Belongs to the complex I subunit 3 family.</text>
</comment>
<evidence type="ECO:0000255" key="1">
    <source>
        <dbReference type="HAMAP-Rule" id="MF_01394"/>
    </source>
</evidence>